<name>HEAT1_CAEEL</name>
<feature type="chain" id="PRO_0000186203" description="HEAT repeat-containing protein 1 homolog">
    <location>
        <begin position="1"/>
        <end position="1650"/>
    </location>
</feature>
<feature type="repeat" description="HEAT">
    <location>
        <begin position="1609"/>
        <end position="1645"/>
    </location>
</feature>
<feature type="region of interest" description="Disordered" evidence="2">
    <location>
        <begin position="1183"/>
        <end position="1210"/>
    </location>
</feature>
<accession>Q23495</accession>
<proteinExistence type="inferred from homology"/>
<organism>
    <name type="scientific">Caenorhabditis elegans</name>
    <dbReference type="NCBI Taxonomy" id="6239"/>
    <lineage>
        <taxon>Eukaryota</taxon>
        <taxon>Metazoa</taxon>
        <taxon>Ecdysozoa</taxon>
        <taxon>Nematoda</taxon>
        <taxon>Chromadorea</taxon>
        <taxon>Rhabditida</taxon>
        <taxon>Rhabditina</taxon>
        <taxon>Rhabditomorpha</taxon>
        <taxon>Rhabditoidea</taxon>
        <taxon>Rhabditidae</taxon>
        <taxon>Peloderinae</taxon>
        <taxon>Caenorhabditis</taxon>
    </lineage>
</organism>
<keyword id="KW-0539">Nucleus</keyword>
<keyword id="KW-1185">Reference proteome</keyword>
<keyword id="KW-0687">Ribonucleoprotein</keyword>
<keyword id="KW-0690">Ribosome biogenesis</keyword>
<keyword id="KW-0698">rRNA processing</keyword>
<sequence>MATSLTSQLENLRTSAARHLTVEKRHVSLLFDRKEANKLSNETAHRIGVAGLEQMKRIDPVFDTEFANDLFSEERVDFVRSMLEKGANEELNKQIEKLLLELSPYLQHFACQQVLEFLIHTYQIYSFNAETLLLTFLPFHETKVYSRLLRILDFDWKRSKEWQFMQQFTKTETPIPFTSIARATLSSKHSIITCITDHIRHAVEIVGSDYLEIKHPILFNFHAKLLLSMFTDPEKVDEMMLAKLMPFIENGIKSPMKSFRYSAMVVISQLVLTVKLKDEVLNSMCKLLITKMRSDTAAASLSTLMVVFQQQNVQSLSKNTLKKLLRHEEGIDVWKILKELSERTDTTKFFNVLWKELIVLSKDAESEDNTLAIDVLIETIEDASILTGDQAGTILKLILQEGMDGNIFDNKKKLKSNIRAIGMRFAKQFDAIHAELKAKDKKTLKNVLKEYQIEDIVQFASEAVAATQSEESIEIISEEAPSSKKIKLTASEKAQKLAQSSEFAKREVFSGDPINKATEWLNGEKWDKVEWALNEMAQRGEKYFSRKVEDDVEQFVLEIVKVVGVGGVKQIDGGSVKAALAGANLNPQFVADLLTKFDGVSEIAPKRTKGAQKKNLVEKTFGTEESWEAFNQRVVFVLDLLNARQIIPSSEKVLAALFAVVKQVNSKSDVESSSYQQHLAVNAIRKILEHPEKTKIGASEVDMDCVIETMRSTHNHHLLRDCLRLIVAAAKHTPNSVVKHVMSVFTFMGNGMLRKDNELTLSIVEKTVESLFSTIINSSGQAVLTKQQQTEKLIELARLFAASAIDIPAHRRARIAQAIARAVQAENASTVVLVLVSSFCARWQRSSDAAAQEAMKRGSDQDAYDDLAIELLSALNPFEQLSSVLEMCEYVRRLGGDKPAKSTTTKKDLDTMIFDRTAQTLPRIRHFRYVVVTLISRIFSNRVLIERLAAYDDEELLKNALPLGKRLIECSVELDEFANKEANDQDGSDPQAQRYWVAFASRTEVVSEKLRHLLPGGVAARLIADVLQECVNDKKMSYKMCEKVLQLANIKLGHDRYLFADSGINEKELITLAQALNKFIVAETKSEEKMRMCQNSAYTLKLIAKNLPSQSESLVLADTMQRCVSIVSQYQKLDENLTGNVLLLAGELIRSHNMRSTIHHATSLLKTCLATVQECIARFSKPQYDSAASPGSSVAGGRGNRGHRIRQQSLGGNKFGSDTLLICSLTCIQRVYDQFASFVVESTGDVIIRYCRLIARFGDPSELLALNQPSSSTTAAFQGGSQTSGFGSKTGIHHRLSLIRRSLLSIELRVLPAHIVKTVGELKTEKKALSALFNLLTGYIETQHQQKPEILRKSVIQLRRTFVSDVITPTLIVRSQERQSDQFENVEKLEHTVFNFVISIASILSEVEFRTVVNELVAWAEPGLEAKADLAARLRLVSLLHFANDLYTSFNSLALPYFGRILEISALVLKKCNATLLLGTDELLLSGKRGSIEALETDLALTLAIDVISNAARHRDFFTVDRCQLVSDVIVNELVNTKVEGHEKRCSDHLVPAIYRIGNADPDSFPELLNKIMLKTRDSRAKIRYRALIVLELLIKEIGDGVQPHLSILLPFLNELIEDENKQVEAQCQKVINSLQHKFGETFWSGGSSA</sequence>
<dbReference type="EMBL" id="FO080155">
    <property type="protein sequence ID" value="CCD61670.1"/>
    <property type="molecule type" value="Genomic_DNA"/>
</dbReference>
<dbReference type="PIR" id="T27864">
    <property type="entry name" value="T27864"/>
</dbReference>
<dbReference type="RefSeq" id="NP_494782.1">
    <property type="nucleotide sequence ID" value="NM_062381.6"/>
</dbReference>
<dbReference type="SMR" id="Q23495"/>
<dbReference type="BioGRID" id="39135">
    <property type="interactions" value="3"/>
</dbReference>
<dbReference type="FunCoup" id="Q23495">
    <property type="interactions" value="2729"/>
</dbReference>
<dbReference type="STRING" id="6239.ZK430.1.1"/>
<dbReference type="iPTMnet" id="Q23495"/>
<dbReference type="PaxDb" id="6239-ZK430.1"/>
<dbReference type="PeptideAtlas" id="Q23495"/>
<dbReference type="EnsemblMetazoa" id="ZK430.1.1">
    <property type="protein sequence ID" value="ZK430.1.1"/>
    <property type="gene ID" value="WBGene00022739"/>
</dbReference>
<dbReference type="GeneID" id="173779"/>
<dbReference type="KEGG" id="cel:CELE_ZK430.1"/>
<dbReference type="UCSC" id="ZK430.1">
    <property type="organism name" value="c. elegans"/>
</dbReference>
<dbReference type="AGR" id="WB:WBGene00022739"/>
<dbReference type="CTD" id="173779"/>
<dbReference type="WormBase" id="ZK430.1">
    <property type="protein sequence ID" value="CE05078"/>
    <property type="gene ID" value="WBGene00022739"/>
    <property type="gene designation" value="toe-1"/>
</dbReference>
<dbReference type="eggNOG" id="KOG1837">
    <property type="taxonomic scope" value="Eukaryota"/>
</dbReference>
<dbReference type="GeneTree" id="ENSGT00390000015845"/>
<dbReference type="HOGENOM" id="CLU_242403_0_0_1"/>
<dbReference type="InParanoid" id="Q23495"/>
<dbReference type="OMA" id="HVMSVFT"/>
<dbReference type="OrthoDB" id="31183at2759"/>
<dbReference type="PhylomeDB" id="Q23495"/>
<dbReference type="Reactome" id="R-CEL-6791226">
    <property type="pathway name" value="Major pathway of rRNA processing in the nucleolus and cytosol"/>
</dbReference>
<dbReference type="PRO" id="PR:Q23495"/>
<dbReference type="Proteomes" id="UP000001940">
    <property type="component" value="Chromosome II"/>
</dbReference>
<dbReference type="Bgee" id="WBGene00022739">
    <property type="expression patterns" value="Expressed in germ line (C elegans) and 4 other cell types or tissues"/>
</dbReference>
<dbReference type="GO" id="GO:0030686">
    <property type="term" value="C:90S preribosome"/>
    <property type="evidence" value="ECO:0000318"/>
    <property type="project" value="GO_Central"/>
</dbReference>
<dbReference type="GO" id="GO:0032040">
    <property type="term" value="C:small-subunit processome"/>
    <property type="evidence" value="ECO:0000318"/>
    <property type="project" value="GO_Central"/>
</dbReference>
<dbReference type="GO" id="GO:0034455">
    <property type="term" value="C:t-UTP complex"/>
    <property type="evidence" value="ECO:0000318"/>
    <property type="project" value="GO_Central"/>
</dbReference>
<dbReference type="GO" id="GO:0030515">
    <property type="term" value="F:snoRNA binding"/>
    <property type="evidence" value="ECO:0000318"/>
    <property type="project" value="GO_Central"/>
</dbReference>
<dbReference type="GO" id="GO:0000462">
    <property type="term" value="P:maturation of SSU-rRNA from tricistronic rRNA transcript (SSU-rRNA, 5.8S rRNA, LSU-rRNA)"/>
    <property type="evidence" value="ECO:0000318"/>
    <property type="project" value="GO_Central"/>
</dbReference>
<dbReference type="GO" id="GO:0045943">
    <property type="term" value="P:positive regulation of transcription by RNA polymerase I"/>
    <property type="evidence" value="ECO:0000318"/>
    <property type="project" value="GO_Central"/>
</dbReference>
<dbReference type="Gene3D" id="1.25.10.10">
    <property type="entry name" value="Leucine-rich Repeat Variant"/>
    <property type="match status" value="1"/>
</dbReference>
<dbReference type="InterPro" id="IPR011989">
    <property type="entry name" value="ARM-like"/>
</dbReference>
<dbReference type="InterPro" id="IPR016024">
    <property type="entry name" value="ARM-type_fold"/>
</dbReference>
<dbReference type="InterPro" id="IPR012954">
    <property type="entry name" value="BP28_C_dom"/>
</dbReference>
<dbReference type="InterPro" id="IPR056473">
    <property type="entry name" value="HEAT_Utp10/HEAT1"/>
</dbReference>
<dbReference type="InterPro" id="IPR022125">
    <property type="entry name" value="U3snoRNP10_N"/>
</dbReference>
<dbReference type="InterPro" id="IPR040191">
    <property type="entry name" value="UTP10"/>
</dbReference>
<dbReference type="PANTHER" id="PTHR13457">
    <property type="entry name" value="BAP28"/>
    <property type="match status" value="1"/>
</dbReference>
<dbReference type="PANTHER" id="PTHR13457:SF1">
    <property type="entry name" value="HEAT REPEAT-CONTAINING PROTEIN 1"/>
    <property type="match status" value="1"/>
</dbReference>
<dbReference type="Pfam" id="PF08146">
    <property type="entry name" value="BP28CT"/>
    <property type="match status" value="1"/>
</dbReference>
<dbReference type="Pfam" id="PF23243">
    <property type="entry name" value="HEAT_HEATR1"/>
    <property type="match status" value="1"/>
</dbReference>
<dbReference type="Pfam" id="PF12397">
    <property type="entry name" value="U3snoRNP10"/>
    <property type="match status" value="1"/>
</dbReference>
<dbReference type="SMART" id="SM01036">
    <property type="entry name" value="BP28CT"/>
    <property type="match status" value="1"/>
</dbReference>
<dbReference type="SUPFAM" id="SSF48371">
    <property type="entry name" value="ARM repeat"/>
    <property type="match status" value="1"/>
</dbReference>
<gene>
    <name type="primary">toe-1</name>
    <name type="ORF">ZK430.1</name>
</gene>
<reference key="1">
    <citation type="journal article" date="1998" name="Science">
        <title>Genome sequence of the nematode C. elegans: a platform for investigating biology.</title>
        <authorList>
            <consortium name="The C. elegans sequencing consortium"/>
        </authorList>
    </citation>
    <scope>NUCLEOTIDE SEQUENCE [LARGE SCALE GENOMIC DNA]</scope>
    <source>
        <strain>Bristol N2</strain>
    </source>
</reference>
<comment type="function">
    <text evidence="1">Involved in nucleolar processing of pre-18S ribosomal RNA. Involved in ribosome biosynthesis (By similarity).</text>
</comment>
<comment type="subcellular location">
    <subcellularLocation>
        <location evidence="1">Nucleus</location>
        <location evidence="1">Nucleolus</location>
    </subcellularLocation>
</comment>
<comment type="similarity">
    <text evidence="3">Belongs to the HEATR1/UTP10 family.</text>
</comment>
<protein>
    <recommendedName>
        <fullName>HEAT repeat-containing protein 1 homolog</fullName>
    </recommendedName>
    <alternativeName>
        <fullName>Target of erk kinase protein 1</fullName>
    </alternativeName>
</protein>
<evidence type="ECO:0000250" key="1"/>
<evidence type="ECO:0000256" key="2">
    <source>
        <dbReference type="SAM" id="MobiDB-lite"/>
    </source>
</evidence>
<evidence type="ECO:0000305" key="3"/>